<gene>
    <name type="primary">SPL8</name>
    <name type="synonym">LG1</name>
    <name type="ordered locus">Os04g0656500</name>
    <name type="ordered locus">LOC_Os04g56170</name>
    <name type="ORF">OSJNBa0071I13.12</name>
</gene>
<accession>Q7XPY1</accession>
<accession>A0A0P0WFS6</accession>
<feature type="chain" id="PRO_0000308232" description="Squamosa promoter-binding-like protein 8">
    <location>
        <begin position="1"/>
        <end position="416"/>
    </location>
</feature>
<feature type="zinc finger region" description="SBP-type" evidence="3">
    <location>
        <begin position="182"/>
        <end position="260"/>
    </location>
</feature>
<feature type="region of interest" description="Disordered" evidence="4">
    <location>
        <begin position="11"/>
        <end position="51"/>
    </location>
</feature>
<feature type="region of interest" description="Disordered" evidence="4">
    <location>
        <begin position="250"/>
        <end position="299"/>
    </location>
</feature>
<feature type="short sequence motif" description="Bipartite nuclear localization signal" evidence="2">
    <location>
        <begin position="243"/>
        <end position="259"/>
    </location>
</feature>
<feature type="compositionally biased region" description="Basic and acidic residues" evidence="4">
    <location>
        <begin position="261"/>
        <end position="273"/>
    </location>
</feature>
<feature type="binding site" evidence="3">
    <location>
        <position position="185"/>
    </location>
    <ligand>
        <name>Zn(2+)</name>
        <dbReference type="ChEBI" id="CHEBI:29105"/>
        <label>1</label>
    </ligand>
</feature>
<feature type="binding site" evidence="3">
    <location>
        <position position="190"/>
    </location>
    <ligand>
        <name>Zn(2+)</name>
        <dbReference type="ChEBI" id="CHEBI:29105"/>
        <label>1</label>
    </ligand>
</feature>
<feature type="binding site" evidence="3">
    <location>
        <position position="207"/>
    </location>
    <ligand>
        <name>Zn(2+)</name>
        <dbReference type="ChEBI" id="CHEBI:29105"/>
        <label>1</label>
    </ligand>
</feature>
<feature type="binding site" evidence="3">
    <location>
        <position position="210"/>
    </location>
    <ligand>
        <name>Zn(2+)</name>
        <dbReference type="ChEBI" id="CHEBI:29105"/>
        <label>1</label>
    </ligand>
</feature>
<feature type="binding site" evidence="3">
    <location>
        <position position="227"/>
    </location>
    <ligand>
        <name>Zn(2+)</name>
        <dbReference type="ChEBI" id="CHEBI:29105"/>
        <label>2</label>
    </ligand>
</feature>
<feature type="binding site" evidence="3">
    <location>
        <position position="230"/>
    </location>
    <ligand>
        <name>Zn(2+)</name>
        <dbReference type="ChEBI" id="CHEBI:29105"/>
        <label>2</label>
    </ligand>
</feature>
<feature type="binding site" evidence="3">
    <location>
        <position position="234"/>
    </location>
    <ligand>
        <name>Zn(2+)</name>
        <dbReference type="ChEBI" id="CHEBI:29105"/>
        <label>2</label>
    </ligand>
</feature>
<feature type="binding site" evidence="3">
    <location>
        <position position="246"/>
    </location>
    <ligand>
        <name>Zn(2+)</name>
        <dbReference type="ChEBI" id="CHEBI:29105"/>
        <label>2</label>
    </ligand>
</feature>
<feature type="sequence conflict" description="In Ref. 5; AK068104." evidence="7" ref="5">
    <original>Q</original>
    <variation>H</variation>
    <location>
        <position position="47"/>
    </location>
</feature>
<feature type="sequence conflict" description="In Ref. 5; AK068104." evidence="7" ref="5">
    <original>D</original>
    <variation>A</variation>
    <location>
        <position position="135"/>
    </location>
</feature>
<sequence length="416" mass="45030">MMNVPSAAAASSCDDFGYNATPPPPPSLLPIMDQDGGGGSIQRDHHQHHNHQQLGYNLEPSSLALLPPSNAAAAAAHHATIAHASPHDLLQFYPTSHYLAAAGGAGGGGNPYSHFTAAAAAGSTFQSYYQQPPQDAPEYYFPTLVSSAEENMASFAATQLGLNLGYRTYFPPRGGYTYGHHPPRCQAEGCKADLSSAKRYHRRHKVCEHHSKAPVVVTAGGLHQRFCQQCSRFHLLDEFDDAKKSCRKRLADHNRRRRKSKPSDGEHSGEKRRAQANKSAATKDKAGSSSKNAGIGDGFETQLLGGAHMSKDQDQAMDLGEVVKEAVDPKGKASMQQQQQQAHHGIHQQSHQQHGFPFPSSSGSCLFPQSQGAVSSTDTSNIAQVQEPSLAFHQQHHQHSNILQLGQAMFDLDFDH</sequence>
<organism>
    <name type="scientific">Oryza sativa subsp. japonica</name>
    <name type="common">Rice</name>
    <dbReference type="NCBI Taxonomy" id="39947"/>
    <lineage>
        <taxon>Eukaryota</taxon>
        <taxon>Viridiplantae</taxon>
        <taxon>Streptophyta</taxon>
        <taxon>Embryophyta</taxon>
        <taxon>Tracheophyta</taxon>
        <taxon>Spermatophyta</taxon>
        <taxon>Magnoliopsida</taxon>
        <taxon>Liliopsida</taxon>
        <taxon>Poales</taxon>
        <taxon>Poaceae</taxon>
        <taxon>BOP clade</taxon>
        <taxon>Oryzoideae</taxon>
        <taxon>Oryzeae</taxon>
        <taxon>Oryzinae</taxon>
        <taxon>Oryza</taxon>
        <taxon>Oryza sativa</taxon>
    </lineage>
</organism>
<reference key="1">
    <citation type="journal article" date="2002" name="Nature">
        <title>Sequence and analysis of rice chromosome 4.</title>
        <authorList>
            <person name="Feng Q."/>
            <person name="Zhang Y."/>
            <person name="Hao P."/>
            <person name="Wang S."/>
            <person name="Fu G."/>
            <person name="Huang Y."/>
            <person name="Li Y."/>
            <person name="Zhu J."/>
            <person name="Liu Y."/>
            <person name="Hu X."/>
            <person name="Jia P."/>
            <person name="Zhang Y."/>
            <person name="Zhao Q."/>
            <person name="Ying K."/>
            <person name="Yu S."/>
            <person name="Tang Y."/>
            <person name="Weng Q."/>
            <person name="Zhang L."/>
            <person name="Lu Y."/>
            <person name="Mu J."/>
            <person name="Lu Y."/>
            <person name="Zhang L.S."/>
            <person name="Yu Z."/>
            <person name="Fan D."/>
            <person name="Liu X."/>
            <person name="Lu T."/>
            <person name="Li C."/>
            <person name="Wu Y."/>
            <person name="Sun T."/>
            <person name="Lei H."/>
            <person name="Li T."/>
            <person name="Hu H."/>
            <person name="Guan J."/>
            <person name="Wu M."/>
            <person name="Zhang R."/>
            <person name="Zhou B."/>
            <person name="Chen Z."/>
            <person name="Chen L."/>
            <person name="Jin Z."/>
            <person name="Wang R."/>
            <person name="Yin H."/>
            <person name="Cai Z."/>
            <person name="Ren S."/>
            <person name="Lv G."/>
            <person name="Gu W."/>
            <person name="Zhu G."/>
            <person name="Tu Y."/>
            <person name="Jia J."/>
            <person name="Zhang Y."/>
            <person name="Chen J."/>
            <person name="Kang H."/>
            <person name="Chen X."/>
            <person name="Shao C."/>
            <person name="Sun Y."/>
            <person name="Hu Q."/>
            <person name="Zhang X."/>
            <person name="Zhang W."/>
            <person name="Wang L."/>
            <person name="Ding C."/>
            <person name="Sheng H."/>
            <person name="Gu J."/>
            <person name="Chen S."/>
            <person name="Ni L."/>
            <person name="Zhu F."/>
            <person name="Chen W."/>
            <person name="Lan L."/>
            <person name="Lai Y."/>
            <person name="Cheng Z."/>
            <person name="Gu M."/>
            <person name="Jiang J."/>
            <person name="Li J."/>
            <person name="Hong G."/>
            <person name="Xue Y."/>
            <person name="Han B."/>
        </authorList>
    </citation>
    <scope>NUCLEOTIDE SEQUENCE [LARGE SCALE GENOMIC DNA]</scope>
    <source>
        <strain>cv. Nipponbare</strain>
    </source>
</reference>
<reference key="2">
    <citation type="journal article" date="2005" name="Nature">
        <title>The map-based sequence of the rice genome.</title>
        <authorList>
            <consortium name="International rice genome sequencing project (IRGSP)"/>
        </authorList>
    </citation>
    <scope>NUCLEOTIDE SEQUENCE [LARGE SCALE GENOMIC DNA]</scope>
    <source>
        <strain>cv. Nipponbare</strain>
    </source>
</reference>
<reference key="3">
    <citation type="journal article" date="2008" name="Nucleic Acids Res.">
        <title>The rice annotation project database (RAP-DB): 2008 update.</title>
        <authorList>
            <consortium name="The rice annotation project (RAP)"/>
        </authorList>
    </citation>
    <scope>GENOME REANNOTATION</scope>
    <source>
        <strain>cv. Nipponbare</strain>
    </source>
</reference>
<reference key="4">
    <citation type="journal article" date="2013" name="Rice">
        <title>Improvement of the Oryza sativa Nipponbare reference genome using next generation sequence and optical map data.</title>
        <authorList>
            <person name="Kawahara Y."/>
            <person name="de la Bastide M."/>
            <person name="Hamilton J.P."/>
            <person name="Kanamori H."/>
            <person name="McCombie W.R."/>
            <person name="Ouyang S."/>
            <person name="Schwartz D.C."/>
            <person name="Tanaka T."/>
            <person name="Wu J."/>
            <person name="Zhou S."/>
            <person name="Childs K.L."/>
            <person name="Davidson R.M."/>
            <person name="Lin H."/>
            <person name="Quesada-Ocampo L."/>
            <person name="Vaillancourt B."/>
            <person name="Sakai H."/>
            <person name="Lee S.S."/>
            <person name="Kim J."/>
            <person name="Numa H."/>
            <person name="Itoh T."/>
            <person name="Buell C.R."/>
            <person name="Matsumoto T."/>
        </authorList>
    </citation>
    <scope>GENOME REANNOTATION</scope>
    <source>
        <strain>cv. Nipponbare</strain>
    </source>
</reference>
<reference key="5">
    <citation type="journal article" date="2003" name="Science">
        <title>Collection, mapping, and annotation of over 28,000 cDNA clones from japonica rice.</title>
        <authorList>
            <consortium name="The rice full-length cDNA consortium"/>
        </authorList>
    </citation>
    <scope>NUCLEOTIDE SEQUENCE [LARGE SCALE MRNA]</scope>
    <source>
        <strain>cv. Nipponbare</strain>
    </source>
</reference>
<reference key="6">
    <citation type="journal article" date="2006" name="Plant Physiol.">
        <title>Genomic organization, differential expression, and interaction of SQUAMOSA promoter-binding-like transcription factors and microRNA156 in rice.</title>
        <authorList>
            <person name="Xie K."/>
            <person name="Wu C."/>
            <person name="Xiong L."/>
        </authorList>
    </citation>
    <scope>TISSUE SPECIFICITY</scope>
    <scope>GENE FAMILY</scope>
    <scope>NOMENCLATURE</scope>
</reference>
<reference key="7">
    <citation type="journal article" date="2008" name="Gene">
        <title>Comparative study of SBP-box gene family in Arabidopsis and rice.</title>
        <authorList>
            <person name="Yang Z."/>
            <person name="Wang X."/>
            <person name="Gu S."/>
            <person name="Hu Z."/>
            <person name="Xu H."/>
            <person name="Xu C."/>
        </authorList>
    </citation>
    <scope>GENE FAMILY</scope>
</reference>
<reference key="8">
    <citation type="journal article" date="2007" name="Plant Mol. Biol.">
        <title>Mutations in the rice liguleless gene result in a complete loss of the auricle, ligule, and laminar joint.</title>
        <authorList>
            <person name="Lee J."/>
            <person name="Park J.-J."/>
            <person name="Kim S.L."/>
            <person name="Yim J."/>
            <person name="An G."/>
        </authorList>
    </citation>
    <scope>FUNCTION</scope>
    <scope>DISRUPTION PHENOTYPE</scope>
    <scope>SUBCELLULAR LOCATION</scope>
    <scope>TISSUE SPECIFICITY</scope>
</reference>
<dbReference type="EMBL" id="AL606685">
    <property type="protein sequence ID" value="CAE03411.3"/>
    <property type="molecule type" value="Genomic_DNA"/>
</dbReference>
<dbReference type="EMBL" id="AP008210">
    <property type="protein sequence ID" value="BAF16033.1"/>
    <property type="molecule type" value="Genomic_DNA"/>
</dbReference>
<dbReference type="EMBL" id="AP014960">
    <property type="protein sequence ID" value="BAS91410.1"/>
    <property type="molecule type" value="Genomic_DNA"/>
</dbReference>
<dbReference type="EMBL" id="AK068104">
    <property type="status" value="NOT_ANNOTATED_CDS"/>
    <property type="molecule type" value="mRNA"/>
</dbReference>
<dbReference type="RefSeq" id="XP_015634037.1">
    <property type="nucleotide sequence ID" value="XM_015778551.1"/>
</dbReference>
<dbReference type="SMR" id="Q7XPY1"/>
<dbReference type="FunCoup" id="Q7XPY1">
    <property type="interactions" value="90"/>
</dbReference>
<dbReference type="PaxDb" id="39947-Q7XPY1"/>
<dbReference type="EnsemblPlants" id="Os04t0656500-01">
    <property type="protein sequence ID" value="Os04t0656500-01"/>
    <property type="gene ID" value="Os04g0656500"/>
</dbReference>
<dbReference type="Gramene" id="Os04t0656500-01">
    <property type="protein sequence ID" value="Os04t0656500-01"/>
    <property type="gene ID" value="Os04g0656500"/>
</dbReference>
<dbReference type="KEGG" id="dosa:Os04g0656500"/>
<dbReference type="eggNOG" id="ENOG502QWHY">
    <property type="taxonomic scope" value="Eukaryota"/>
</dbReference>
<dbReference type="HOGENOM" id="CLU_689660_0_0_1"/>
<dbReference type="InParanoid" id="Q7XPY1"/>
<dbReference type="OMA" id="QFYPTSH"/>
<dbReference type="OrthoDB" id="514967at2759"/>
<dbReference type="Proteomes" id="UP000000763">
    <property type="component" value="Chromosome 4"/>
</dbReference>
<dbReference type="Proteomes" id="UP000059680">
    <property type="component" value="Chromosome 4"/>
</dbReference>
<dbReference type="GO" id="GO:0005634">
    <property type="term" value="C:nucleus"/>
    <property type="evidence" value="ECO:0007669"/>
    <property type="project" value="UniProtKB-SubCell"/>
</dbReference>
<dbReference type="GO" id="GO:0003677">
    <property type="term" value="F:DNA binding"/>
    <property type="evidence" value="ECO:0007669"/>
    <property type="project" value="UniProtKB-KW"/>
</dbReference>
<dbReference type="GO" id="GO:0008270">
    <property type="term" value="F:zinc ion binding"/>
    <property type="evidence" value="ECO:0007669"/>
    <property type="project" value="UniProtKB-KW"/>
</dbReference>
<dbReference type="Gene3D" id="4.10.1100.10">
    <property type="entry name" value="Transcription factor, SBP-box domain"/>
    <property type="match status" value="1"/>
</dbReference>
<dbReference type="InterPro" id="IPR044817">
    <property type="entry name" value="SBP-like"/>
</dbReference>
<dbReference type="InterPro" id="IPR004333">
    <property type="entry name" value="SBP_dom"/>
</dbReference>
<dbReference type="InterPro" id="IPR036893">
    <property type="entry name" value="SBP_sf"/>
</dbReference>
<dbReference type="PANTHER" id="PTHR31251">
    <property type="entry name" value="SQUAMOSA PROMOTER-BINDING-LIKE PROTEIN 4"/>
    <property type="match status" value="1"/>
</dbReference>
<dbReference type="PANTHER" id="PTHR31251:SF198">
    <property type="entry name" value="SQUAMOSA PROMOTER-BINDING-LIKE PROTEIN 8"/>
    <property type="match status" value="1"/>
</dbReference>
<dbReference type="Pfam" id="PF03110">
    <property type="entry name" value="SBP"/>
    <property type="match status" value="1"/>
</dbReference>
<dbReference type="SUPFAM" id="SSF103612">
    <property type="entry name" value="SBT domain"/>
    <property type="match status" value="1"/>
</dbReference>
<dbReference type="PROSITE" id="PS51141">
    <property type="entry name" value="ZF_SBP"/>
    <property type="match status" value="1"/>
</dbReference>
<comment type="function">
    <text evidence="6">Probable transcription factor that plays an important role in building the laminar joint between leaf blade and leaf sheath boundary, thereby controlling ligule and auricle development.</text>
</comment>
<comment type="subcellular location">
    <subcellularLocation>
        <location evidence="6">Nucleus</location>
    </subcellularLocation>
</comment>
<comment type="tissue specificity">
    <text evidence="5 6">Expressed in stems, leaf sheaths, and young panicles. Weakly expressed in ligules, auricles, and leaf sheaths at the basal region.</text>
</comment>
<comment type="developmental stage">
    <text>Expressed in developing laminar joint and meristematic regions.</text>
</comment>
<comment type="domain">
    <text evidence="1">The SBP-type zinc finger is required for the binding to DNA.</text>
</comment>
<comment type="disruption phenotype">
    <text evidence="6">Plants show upright attitudes and the absence of laminar joints, ligules and auricules in all the leaves including the flag leaves.</text>
</comment>
<proteinExistence type="evidence at transcript level"/>
<evidence type="ECO:0000250" key="1"/>
<evidence type="ECO:0000255" key="2"/>
<evidence type="ECO:0000255" key="3">
    <source>
        <dbReference type="PROSITE-ProRule" id="PRU00470"/>
    </source>
</evidence>
<evidence type="ECO:0000256" key="4">
    <source>
        <dbReference type="SAM" id="MobiDB-lite"/>
    </source>
</evidence>
<evidence type="ECO:0000269" key="5">
    <source>
    </source>
</evidence>
<evidence type="ECO:0000269" key="6">
    <source>
    </source>
</evidence>
<evidence type="ECO:0000305" key="7"/>
<keyword id="KW-0238">DNA-binding</keyword>
<keyword id="KW-0479">Metal-binding</keyword>
<keyword id="KW-0539">Nucleus</keyword>
<keyword id="KW-1185">Reference proteome</keyword>
<keyword id="KW-0804">Transcription</keyword>
<keyword id="KW-0805">Transcription regulation</keyword>
<keyword id="KW-0862">Zinc</keyword>
<keyword id="KW-0863">Zinc-finger</keyword>
<protein>
    <recommendedName>
        <fullName>Squamosa promoter-binding-like protein 8</fullName>
    </recommendedName>
    <alternativeName>
        <fullName>OsLG1</fullName>
    </alternativeName>
    <alternativeName>
        <fullName>Protein LIGULELESS 1</fullName>
    </alternativeName>
</protein>
<name>SPL8_ORYSJ</name>